<accession>Q55C58</accession>
<name>VPS16_DICDI</name>
<comment type="function">
    <text evidence="1">May play a role in vesicle-mediated protein trafficking to endosomal/lysosomal compartments and in membrane docking/fusion reactions.</text>
</comment>
<comment type="subcellular location">
    <subcellularLocation>
        <location evidence="1">Endosome membrane</location>
        <topology evidence="1">Peripheral membrane protein</topology>
    </subcellularLocation>
</comment>
<comment type="similarity">
    <text evidence="2">Belongs to the VPS16 family.</text>
</comment>
<evidence type="ECO:0000250" key="1"/>
<evidence type="ECO:0000305" key="2"/>
<organism>
    <name type="scientific">Dictyostelium discoideum</name>
    <name type="common">Social amoeba</name>
    <dbReference type="NCBI Taxonomy" id="44689"/>
    <lineage>
        <taxon>Eukaryota</taxon>
        <taxon>Amoebozoa</taxon>
        <taxon>Evosea</taxon>
        <taxon>Eumycetozoa</taxon>
        <taxon>Dictyostelia</taxon>
        <taxon>Dictyosteliales</taxon>
        <taxon>Dictyosteliaceae</taxon>
        <taxon>Dictyostelium</taxon>
    </lineage>
</organism>
<proteinExistence type="inferred from homology"/>
<sequence length="832" mass="94870">MIAAQWKIIGNSTYIKKEIYSMSWDVDLKQQVSVGSPFAGPIAVMRDSSKFVEMNSQNMKPYLKIFTASGDLISQMIWDSSKNIVAMDWIEKERLVIVLQNATVLIFNVFCEQMTQFSLGDIVREEEILECKIWSDGIVVLTSASQLYSVPSINDFFVESGRVIRLPPLPEEPKARPEWAILEPQFSLSQSIEIFMSINGTLYLIDEDKVESQLEATEPIQKMVVSPCGKKLACFDTKGTLLILKTDGSTTNPDRMDTKATKSPVLKWCGSDGVMMYWDSIKDPILFYFSKGDSWAKFTLDQPVSLVTEIDGLRIISDTTSEFFHKVSDVTIDIFKIGTTSPASILYDATDHFISKSPQADESIRSINDQLEDAVNDCILAAGFEFNGGEQSKLLKAASFGKCFLENYNPSQFVTMCRSLRVLNAVRHHEIGIPLSIKQYYHIGIEELIDRLISRRKHLLAWRICDYLKIKSDVVLNHWACTKVRTDIPDQELGKIIIKKLESVPGISFANIASAAYLAGRSKLATKLLEYEPKAAEQVPPLIKMGESGLALNKAIESGDTDLVYLVLLAMQRSLPLADFLELTFSKVVALDLLISMCKQKNDFPLLREIYHIKDQSKEMGNIYLQEALSSHPSQLDQRIKAYNKSIEHYHHSKDKDDQATSKFIDDQIKLEMLQKELETNLQDESFVGISINDTIYKLITMNQPKKAQSIRSEFKVPDKRFWWIKIKALSIMNDWEELMKFSKEKKSPIGYEPFVEVCLDQKNQIEALKYIPKITDILPKIQFYIQIGYFREAADIAFKEKNFDLLNLISRKCTNNEILNIIEQMKSQIRR</sequence>
<protein>
    <recommendedName>
        <fullName>Vacuolar protein sorting-associated protein 16 homolog</fullName>
    </recommendedName>
</protein>
<dbReference type="EMBL" id="AAFI02000005">
    <property type="protein sequence ID" value="EAL72727.2"/>
    <property type="molecule type" value="Genomic_DNA"/>
</dbReference>
<dbReference type="RefSeq" id="XP_646623.2">
    <property type="nucleotide sequence ID" value="XM_641531.2"/>
</dbReference>
<dbReference type="SMR" id="Q55C58"/>
<dbReference type="FunCoup" id="Q55C58">
    <property type="interactions" value="1073"/>
</dbReference>
<dbReference type="STRING" id="44689.Q55C58"/>
<dbReference type="PaxDb" id="44689-DDB0234137"/>
<dbReference type="EnsemblProtists" id="EAL72727">
    <property type="protein sequence ID" value="EAL72727"/>
    <property type="gene ID" value="DDB_G0270754"/>
</dbReference>
<dbReference type="GeneID" id="8617595"/>
<dbReference type="KEGG" id="ddi:DDB_G0270754"/>
<dbReference type="dictyBase" id="DDB_G0270754">
    <property type="gene designation" value="vps16"/>
</dbReference>
<dbReference type="VEuPathDB" id="AmoebaDB:DDB_G0270754"/>
<dbReference type="eggNOG" id="KOG2280">
    <property type="taxonomic scope" value="Eukaryota"/>
</dbReference>
<dbReference type="HOGENOM" id="CLU_008909_1_0_1"/>
<dbReference type="InParanoid" id="Q55C58"/>
<dbReference type="OMA" id="WCGDDCL"/>
<dbReference type="PhylomeDB" id="Q55C58"/>
<dbReference type="PRO" id="PR:Q55C58"/>
<dbReference type="Proteomes" id="UP000002195">
    <property type="component" value="Chromosome 1"/>
</dbReference>
<dbReference type="GO" id="GO:0015629">
    <property type="term" value="C:actin cytoskeleton"/>
    <property type="evidence" value="ECO:0000250"/>
    <property type="project" value="dictyBase"/>
</dbReference>
<dbReference type="GO" id="GO:0005768">
    <property type="term" value="C:endosome"/>
    <property type="evidence" value="ECO:0000318"/>
    <property type="project" value="GO_Central"/>
</dbReference>
<dbReference type="GO" id="GO:0010008">
    <property type="term" value="C:endosome membrane"/>
    <property type="evidence" value="ECO:0007669"/>
    <property type="project" value="UniProtKB-SubCell"/>
</dbReference>
<dbReference type="GO" id="GO:0030897">
    <property type="term" value="C:HOPS complex"/>
    <property type="evidence" value="ECO:0000250"/>
    <property type="project" value="dictyBase"/>
</dbReference>
<dbReference type="GO" id="GO:0003779">
    <property type="term" value="F:actin binding"/>
    <property type="evidence" value="ECO:0000250"/>
    <property type="project" value="dictyBase"/>
</dbReference>
<dbReference type="GO" id="GO:0016197">
    <property type="term" value="P:endosomal transport"/>
    <property type="evidence" value="ECO:0000318"/>
    <property type="project" value="GO_Central"/>
</dbReference>
<dbReference type="GO" id="GO:0006886">
    <property type="term" value="P:intracellular protein transport"/>
    <property type="evidence" value="ECO:0007669"/>
    <property type="project" value="InterPro"/>
</dbReference>
<dbReference type="GO" id="GO:0042144">
    <property type="term" value="P:vacuole fusion, non-autophagic"/>
    <property type="evidence" value="ECO:0000250"/>
    <property type="project" value="dictyBase"/>
</dbReference>
<dbReference type="GO" id="GO:0016192">
    <property type="term" value="P:vesicle-mediated transport"/>
    <property type="evidence" value="ECO:0000250"/>
    <property type="project" value="dictyBase"/>
</dbReference>
<dbReference type="FunFam" id="1.10.150.780:FF:000001">
    <property type="entry name" value="Vacuolar protein sorting-associated protein 16 homolog"/>
    <property type="match status" value="1"/>
</dbReference>
<dbReference type="Gene3D" id="1.10.150.780">
    <property type="entry name" value="Vps16, C-terminal region"/>
    <property type="match status" value="1"/>
</dbReference>
<dbReference type="InterPro" id="IPR016534">
    <property type="entry name" value="VPS16"/>
</dbReference>
<dbReference type="InterPro" id="IPR006925">
    <property type="entry name" value="Vps16_C"/>
</dbReference>
<dbReference type="InterPro" id="IPR038132">
    <property type="entry name" value="Vps16_C_sf"/>
</dbReference>
<dbReference type="InterPro" id="IPR006926">
    <property type="entry name" value="Vps16_N"/>
</dbReference>
<dbReference type="InterPro" id="IPR036322">
    <property type="entry name" value="WD40_repeat_dom_sf"/>
</dbReference>
<dbReference type="PANTHER" id="PTHR12811">
    <property type="entry name" value="VACUOLAR PROTEIN SORTING VPS16"/>
    <property type="match status" value="1"/>
</dbReference>
<dbReference type="PANTHER" id="PTHR12811:SF0">
    <property type="entry name" value="VACUOLAR PROTEIN SORTING-ASSOCIATED PROTEIN 16 HOMOLOG"/>
    <property type="match status" value="1"/>
</dbReference>
<dbReference type="Pfam" id="PF04840">
    <property type="entry name" value="Vps16_C"/>
    <property type="match status" value="1"/>
</dbReference>
<dbReference type="Pfam" id="PF04841">
    <property type="entry name" value="Vps16_N"/>
    <property type="match status" value="1"/>
</dbReference>
<dbReference type="PIRSF" id="PIRSF007949">
    <property type="entry name" value="VPS16"/>
    <property type="match status" value="1"/>
</dbReference>
<dbReference type="SUPFAM" id="SSF50978">
    <property type="entry name" value="WD40 repeat-like"/>
    <property type="match status" value="1"/>
</dbReference>
<reference key="1">
    <citation type="journal article" date="2005" name="Nature">
        <title>The genome of the social amoeba Dictyostelium discoideum.</title>
        <authorList>
            <person name="Eichinger L."/>
            <person name="Pachebat J.A."/>
            <person name="Gloeckner G."/>
            <person name="Rajandream M.A."/>
            <person name="Sucgang R."/>
            <person name="Berriman M."/>
            <person name="Song J."/>
            <person name="Olsen R."/>
            <person name="Szafranski K."/>
            <person name="Xu Q."/>
            <person name="Tunggal B."/>
            <person name="Kummerfeld S."/>
            <person name="Madera M."/>
            <person name="Konfortov B.A."/>
            <person name="Rivero F."/>
            <person name="Bankier A.T."/>
            <person name="Lehmann R."/>
            <person name="Hamlin N."/>
            <person name="Davies R."/>
            <person name="Gaudet P."/>
            <person name="Fey P."/>
            <person name="Pilcher K."/>
            <person name="Chen G."/>
            <person name="Saunders D."/>
            <person name="Sodergren E.J."/>
            <person name="Davis P."/>
            <person name="Kerhornou A."/>
            <person name="Nie X."/>
            <person name="Hall N."/>
            <person name="Anjard C."/>
            <person name="Hemphill L."/>
            <person name="Bason N."/>
            <person name="Farbrother P."/>
            <person name="Desany B."/>
            <person name="Just E."/>
            <person name="Morio T."/>
            <person name="Rost R."/>
            <person name="Churcher C.M."/>
            <person name="Cooper J."/>
            <person name="Haydock S."/>
            <person name="van Driessche N."/>
            <person name="Cronin A."/>
            <person name="Goodhead I."/>
            <person name="Muzny D.M."/>
            <person name="Mourier T."/>
            <person name="Pain A."/>
            <person name="Lu M."/>
            <person name="Harper D."/>
            <person name="Lindsay R."/>
            <person name="Hauser H."/>
            <person name="James K.D."/>
            <person name="Quiles M."/>
            <person name="Madan Babu M."/>
            <person name="Saito T."/>
            <person name="Buchrieser C."/>
            <person name="Wardroper A."/>
            <person name="Felder M."/>
            <person name="Thangavelu M."/>
            <person name="Johnson D."/>
            <person name="Knights A."/>
            <person name="Loulseged H."/>
            <person name="Mungall K.L."/>
            <person name="Oliver K."/>
            <person name="Price C."/>
            <person name="Quail M.A."/>
            <person name="Urushihara H."/>
            <person name="Hernandez J."/>
            <person name="Rabbinowitsch E."/>
            <person name="Steffen D."/>
            <person name="Sanders M."/>
            <person name="Ma J."/>
            <person name="Kohara Y."/>
            <person name="Sharp S."/>
            <person name="Simmonds M.N."/>
            <person name="Spiegler S."/>
            <person name="Tivey A."/>
            <person name="Sugano S."/>
            <person name="White B."/>
            <person name="Walker D."/>
            <person name="Woodward J.R."/>
            <person name="Winckler T."/>
            <person name="Tanaka Y."/>
            <person name="Shaulsky G."/>
            <person name="Schleicher M."/>
            <person name="Weinstock G.M."/>
            <person name="Rosenthal A."/>
            <person name="Cox E.C."/>
            <person name="Chisholm R.L."/>
            <person name="Gibbs R.A."/>
            <person name="Loomis W.F."/>
            <person name="Platzer M."/>
            <person name="Kay R.R."/>
            <person name="Williams J.G."/>
            <person name="Dear P.H."/>
            <person name="Noegel A.A."/>
            <person name="Barrell B.G."/>
            <person name="Kuspa A."/>
        </authorList>
    </citation>
    <scope>NUCLEOTIDE SEQUENCE [LARGE SCALE GENOMIC DNA]</scope>
    <source>
        <strain>AX4</strain>
    </source>
</reference>
<gene>
    <name type="primary">vps16</name>
    <name type="ORF">DDB_G0270754</name>
</gene>
<feature type="chain" id="PRO_0000328323" description="Vacuolar protein sorting-associated protein 16 homolog">
    <location>
        <begin position="1"/>
        <end position="832"/>
    </location>
</feature>
<keyword id="KW-0967">Endosome</keyword>
<keyword id="KW-0472">Membrane</keyword>
<keyword id="KW-0653">Protein transport</keyword>
<keyword id="KW-1185">Reference proteome</keyword>
<keyword id="KW-0813">Transport</keyword>